<dbReference type="EMBL" id="AY509253">
    <property type="protein sequence ID" value="AAS00965.1"/>
    <property type="molecule type" value="Genomic_DNA"/>
</dbReference>
<dbReference type="RefSeq" id="YP_024618.1">
    <property type="nucleotide sequence ID" value="NC_005881.2"/>
</dbReference>
<dbReference type="SMR" id="Q6R7F0"/>
<dbReference type="KEGG" id="vg:2948249"/>
<dbReference type="Proteomes" id="UP000007021">
    <property type="component" value="Segment"/>
</dbReference>
<evidence type="ECO:0000256" key="1">
    <source>
        <dbReference type="SAM" id="MobiDB-lite"/>
    </source>
</evidence>
<organism>
    <name type="scientific">Ostreid herpesvirus 1 (isolate France)</name>
    <name type="common">OsHV-1</name>
    <name type="synonym">Pacific oyster herpesvirus</name>
    <dbReference type="NCBI Taxonomy" id="654903"/>
    <lineage>
        <taxon>Viruses</taxon>
        <taxon>Duplodnaviria</taxon>
        <taxon>Heunggongvirae</taxon>
        <taxon>Peploviricota</taxon>
        <taxon>Herviviricetes</taxon>
        <taxon>Herpesvirales</taxon>
        <taxon>Malacoherpesviridae</taxon>
        <taxon>Ostreavirus</taxon>
        <taxon>Ostreavirus ostreidmalaco1</taxon>
        <taxon>Ostreid herpesvirus 1</taxon>
    </lineage>
</organism>
<feature type="chain" id="PRO_0000385100" description="Uncharacterized protein ORF79">
    <location>
        <begin position="1"/>
        <end position="146"/>
    </location>
</feature>
<feature type="region of interest" description="Disordered" evidence="1">
    <location>
        <begin position="86"/>
        <end position="124"/>
    </location>
</feature>
<feature type="compositionally biased region" description="Acidic residues" evidence="1">
    <location>
        <begin position="86"/>
        <end position="96"/>
    </location>
</feature>
<reference key="1">
    <citation type="journal article" date="2005" name="J. Gen. Virol.">
        <title>A novel class of herpesvirus with bivalve hosts.</title>
        <authorList>
            <person name="Davison A.J."/>
            <person name="Trus B.L."/>
            <person name="Cheng N."/>
            <person name="Steven A.C."/>
            <person name="Watson M.S."/>
            <person name="Cunningham C."/>
            <person name="Le Deuff R.M."/>
            <person name="Renault T."/>
        </authorList>
    </citation>
    <scope>NUCLEOTIDE SEQUENCE [LARGE SCALE GENOMIC DNA]</scope>
</reference>
<keyword id="KW-1185">Reference proteome</keyword>
<accession>Q6R7F0</accession>
<name>Y079_OSHVF</name>
<proteinExistence type="predicted"/>
<sequence length="146" mass="17150">MNFEAISLEMSLMWLHKNNKLMGFLNQEAPEVNIFDQFLFEDRDKKMLKEDDEFCDPPAQTFNEPAPSTSKITDVDIEFYNSMAEEFDSPMDEEEETKPREASLDQTAPKKSKKEELLVKNNNFSTNNVKKLQFKKSVRLRSKRRS</sequence>
<protein>
    <recommendedName>
        <fullName>Uncharacterized protein ORF79</fullName>
    </recommendedName>
</protein>
<organismHost>
    <name type="scientific">Magallana gigas</name>
    <name type="common">Pacific oyster</name>
    <name type="synonym">Crassostrea gigas</name>
    <dbReference type="NCBI Taxonomy" id="29159"/>
</organismHost>
<organismHost>
    <name type="scientific">Pecten maximus</name>
    <name type="common">King scallop</name>
    <name type="synonym">Pilgrim's clam</name>
    <dbReference type="NCBI Taxonomy" id="6579"/>
</organismHost>
<gene>
    <name type="ORF">ORF79</name>
</gene>